<comment type="function">
    <text evidence="1">The glycine cleavage system catalyzes the degradation of glycine. The H protein shuttles the methylamine group of glycine from the P protein to the T protein.</text>
</comment>
<comment type="cofactor">
    <cofactor evidence="1">
        <name>(R)-lipoate</name>
        <dbReference type="ChEBI" id="CHEBI:83088"/>
    </cofactor>
    <text evidence="1">Binds 1 lipoyl cofactor covalently.</text>
</comment>
<comment type="subunit">
    <text evidence="1">The glycine cleavage system is composed of four proteins: P, T, L and H.</text>
</comment>
<comment type="similarity">
    <text evidence="1">Belongs to the GcvH family.</text>
</comment>
<dbReference type="EMBL" id="AE000657">
    <property type="protein sequence ID" value="AAC07053.1"/>
    <property type="molecule type" value="Genomic_DNA"/>
</dbReference>
<dbReference type="PIR" id="E70381">
    <property type="entry name" value="E70381"/>
</dbReference>
<dbReference type="RefSeq" id="NP_213643.1">
    <property type="nucleotide sequence ID" value="NC_000918.1"/>
</dbReference>
<dbReference type="RefSeq" id="WP_010880581.1">
    <property type="nucleotide sequence ID" value="NC_000918.1"/>
</dbReference>
<dbReference type="SMR" id="O67080"/>
<dbReference type="STRING" id="224324.aq_944"/>
<dbReference type="EnsemblBacteria" id="AAC07053">
    <property type="protein sequence ID" value="AAC07053"/>
    <property type="gene ID" value="aq_944"/>
</dbReference>
<dbReference type="KEGG" id="aae:aq_944"/>
<dbReference type="PATRIC" id="fig|224324.8.peg.740"/>
<dbReference type="eggNOG" id="COG0509">
    <property type="taxonomic scope" value="Bacteria"/>
</dbReference>
<dbReference type="HOGENOM" id="CLU_097408_2_2_0"/>
<dbReference type="InParanoid" id="O67080"/>
<dbReference type="OrthoDB" id="13943at2"/>
<dbReference type="Proteomes" id="UP000000798">
    <property type="component" value="Chromosome"/>
</dbReference>
<dbReference type="GO" id="GO:0005829">
    <property type="term" value="C:cytosol"/>
    <property type="evidence" value="ECO:0000318"/>
    <property type="project" value="GO_Central"/>
</dbReference>
<dbReference type="GO" id="GO:0005960">
    <property type="term" value="C:glycine cleavage complex"/>
    <property type="evidence" value="ECO:0007669"/>
    <property type="project" value="InterPro"/>
</dbReference>
<dbReference type="GO" id="GO:0019464">
    <property type="term" value="P:glycine decarboxylation via glycine cleavage system"/>
    <property type="evidence" value="ECO:0007669"/>
    <property type="project" value="UniProtKB-UniRule"/>
</dbReference>
<dbReference type="CDD" id="cd06848">
    <property type="entry name" value="GCS_H"/>
    <property type="match status" value="1"/>
</dbReference>
<dbReference type="Gene3D" id="2.40.50.100">
    <property type="match status" value="1"/>
</dbReference>
<dbReference type="HAMAP" id="MF_00272">
    <property type="entry name" value="GcvH"/>
    <property type="match status" value="1"/>
</dbReference>
<dbReference type="InterPro" id="IPR003016">
    <property type="entry name" value="2-oxoA_DH_lipoyl-BS"/>
</dbReference>
<dbReference type="InterPro" id="IPR000089">
    <property type="entry name" value="Biotin_lipoyl"/>
</dbReference>
<dbReference type="InterPro" id="IPR002930">
    <property type="entry name" value="GCV_H"/>
</dbReference>
<dbReference type="InterPro" id="IPR033753">
    <property type="entry name" value="GCV_H/Fam206"/>
</dbReference>
<dbReference type="InterPro" id="IPR011053">
    <property type="entry name" value="Single_hybrid_motif"/>
</dbReference>
<dbReference type="NCBIfam" id="NF002270">
    <property type="entry name" value="PRK01202.1"/>
    <property type="match status" value="1"/>
</dbReference>
<dbReference type="PANTHER" id="PTHR11715">
    <property type="entry name" value="GLYCINE CLEAVAGE SYSTEM H PROTEIN"/>
    <property type="match status" value="1"/>
</dbReference>
<dbReference type="PANTHER" id="PTHR11715:SF3">
    <property type="entry name" value="GLYCINE CLEAVAGE SYSTEM H PROTEIN-RELATED"/>
    <property type="match status" value="1"/>
</dbReference>
<dbReference type="Pfam" id="PF01597">
    <property type="entry name" value="GCV_H"/>
    <property type="match status" value="1"/>
</dbReference>
<dbReference type="SUPFAM" id="SSF51230">
    <property type="entry name" value="Single hybrid motif"/>
    <property type="match status" value="1"/>
</dbReference>
<dbReference type="PROSITE" id="PS50968">
    <property type="entry name" value="BIOTINYL_LIPOYL"/>
    <property type="match status" value="1"/>
</dbReference>
<dbReference type="PROSITE" id="PS00189">
    <property type="entry name" value="LIPOYL"/>
    <property type="match status" value="1"/>
</dbReference>
<name>GCSH3_AQUAE</name>
<accession>O67080</accession>
<sequence length="161" mass="18106">MGKQEKDLGTAWEYQGCLIPKDLYYDIENQVWVRVNEDGTVTLGLTDVGQTRAGRLLHIRVKPVGTKVKKGKPVATLESGKWAGPVPALVEGEIVEVNPKVVEDPNYINIDPYGDAWIVKIKPTSEETLKRDLSELAHGEKAHEEMKKHIDEWDIVCMRCV</sequence>
<evidence type="ECO:0000255" key="1">
    <source>
        <dbReference type="HAMAP-Rule" id="MF_00272"/>
    </source>
</evidence>
<evidence type="ECO:0000255" key="2">
    <source>
        <dbReference type="PROSITE-ProRule" id="PRU01066"/>
    </source>
</evidence>
<keyword id="KW-0450">Lipoyl</keyword>
<keyword id="KW-1185">Reference proteome</keyword>
<protein>
    <recommendedName>
        <fullName evidence="1">Glycine cleavage system H protein 3</fullName>
    </recommendedName>
</protein>
<feature type="chain" id="PRO_0000166199" description="Glycine cleavage system H protein 3">
    <location>
        <begin position="1"/>
        <end position="161"/>
    </location>
</feature>
<feature type="domain" description="Lipoyl-binding" evidence="2">
    <location>
        <begin position="40"/>
        <end position="122"/>
    </location>
</feature>
<feature type="modified residue" description="N6-lipoyllysine" evidence="1">
    <location>
        <position position="81"/>
    </location>
</feature>
<gene>
    <name evidence="1" type="primary">gcvH3</name>
    <name type="ordered locus">aq_944</name>
</gene>
<organism>
    <name type="scientific">Aquifex aeolicus (strain VF5)</name>
    <dbReference type="NCBI Taxonomy" id="224324"/>
    <lineage>
        <taxon>Bacteria</taxon>
        <taxon>Pseudomonadati</taxon>
        <taxon>Aquificota</taxon>
        <taxon>Aquificia</taxon>
        <taxon>Aquificales</taxon>
        <taxon>Aquificaceae</taxon>
        <taxon>Aquifex</taxon>
    </lineage>
</organism>
<proteinExistence type="inferred from homology"/>
<reference key="1">
    <citation type="journal article" date="1998" name="Nature">
        <title>The complete genome of the hyperthermophilic bacterium Aquifex aeolicus.</title>
        <authorList>
            <person name="Deckert G."/>
            <person name="Warren P.V."/>
            <person name="Gaasterland T."/>
            <person name="Young W.G."/>
            <person name="Lenox A.L."/>
            <person name="Graham D.E."/>
            <person name="Overbeek R."/>
            <person name="Snead M.A."/>
            <person name="Keller M."/>
            <person name="Aujay M."/>
            <person name="Huber R."/>
            <person name="Feldman R.A."/>
            <person name="Short J.M."/>
            <person name="Olsen G.J."/>
            <person name="Swanson R.V."/>
        </authorList>
    </citation>
    <scope>NUCLEOTIDE SEQUENCE [LARGE SCALE GENOMIC DNA]</scope>
    <source>
        <strain>VF5</strain>
    </source>
</reference>